<proteinExistence type="inferred from homology"/>
<reference key="1">
    <citation type="journal article" date="2007" name="PLoS ONE">
        <title>Complete genomic characterization of a pathogenic A.II strain of Francisella tularensis subspecies tularensis.</title>
        <authorList>
            <person name="Beckstrom-Sternberg S.M."/>
            <person name="Auerbach R.K."/>
            <person name="Godbole S."/>
            <person name="Pearson J.V."/>
            <person name="Beckstrom-Sternberg J.S."/>
            <person name="Deng Z."/>
            <person name="Munk C."/>
            <person name="Kubota K."/>
            <person name="Zhou Y."/>
            <person name="Bruce D."/>
            <person name="Noronha J."/>
            <person name="Scheuermann R.H."/>
            <person name="Wang A."/>
            <person name="Wei X."/>
            <person name="Wang J."/>
            <person name="Hao J."/>
            <person name="Wagner D.M."/>
            <person name="Brettin T.S."/>
            <person name="Brown N."/>
            <person name="Gilna P."/>
            <person name="Keim P.S."/>
        </authorList>
    </citation>
    <scope>NUCLEOTIDE SEQUENCE [LARGE SCALE GENOMIC DNA]</scope>
    <source>
        <strain>WY96-3418</strain>
    </source>
</reference>
<organism>
    <name type="scientific">Francisella tularensis subsp. tularensis (strain WY96-3418)</name>
    <dbReference type="NCBI Taxonomy" id="418136"/>
    <lineage>
        <taxon>Bacteria</taxon>
        <taxon>Pseudomonadati</taxon>
        <taxon>Pseudomonadota</taxon>
        <taxon>Gammaproteobacteria</taxon>
        <taxon>Thiotrichales</taxon>
        <taxon>Francisellaceae</taxon>
        <taxon>Francisella</taxon>
    </lineage>
</organism>
<comment type="function">
    <text evidence="1">Cleaves peptides in various proteins in a process that requires ATP hydrolysis. Has a chymotrypsin-like activity. Plays a major role in the degradation of misfolded proteins.</text>
</comment>
<comment type="catalytic activity">
    <reaction evidence="1">
        <text>Hydrolysis of proteins to small peptides in the presence of ATP and magnesium. alpha-casein is the usual test substrate. In the absence of ATP, only oligopeptides shorter than five residues are hydrolyzed (such as succinyl-Leu-Tyr-|-NHMec, and Leu-Tyr-Leu-|-Tyr-Trp, in which cleavage of the -Tyr-|-Leu- and -Tyr-|-Trp bonds also occurs).</text>
        <dbReference type="EC" id="3.4.21.92"/>
    </reaction>
</comment>
<comment type="subunit">
    <text evidence="1">Fourteen ClpP subunits assemble into 2 heptameric rings which stack back to back to give a disk-like structure with a central cavity, resembling the structure of eukaryotic proteasomes.</text>
</comment>
<comment type="subcellular location">
    <subcellularLocation>
        <location evidence="1">Cytoplasm</location>
    </subcellularLocation>
</comment>
<comment type="similarity">
    <text evidence="1">Belongs to the peptidase S14 family.</text>
</comment>
<keyword id="KW-0963">Cytoplasm</keyword>
<keyword id="KW-0378">Hydrolase</keyword>
<keyword id="KW-0645">Protease</keyword>
<keyword id="KW-0720">Serine protease</keyword>
<name>CLPP_FRATW</name>
<dbReference type="EC" id="3.4.21.92" evidence="1"/>
<dbReference type="EMBL" id="CP000608">
    <property type="protein sequence ID" value="ABO46917.1"/>
    <property type="molecule type" value="Genomic_DNA"/>
</dbReference>
<dbReference type="RefSeq" id="WP_003015534.1">
    <property type="nucleotide sequence ID" value="NC_009257.1"/>
</dbReference>
<dbReference type="SMR" id="A4IYB6"/>
<dbReference type="MEROPS" id="S14.001"/>
<dbReference type="GeneID" id="75265209"/>
<dbReference type="KEGG" id="ftw:FTW_1105"/>
<dbReference type="HOGENOM" id="CLU_058707_3_2_6"/>
<dbReference type="GO" id="GO:0005737">
    <property type="term" value="C:cytoplasm"/>
    <property type="evidence" value="ECO:0007669"/>
    <property type="project" value="UniProtKB-SubCell"/>
</dbReference>
<dbReference type="GO" id="GO:0009368">
    <property type="term" value="C:endopeptidase Clp complex"/>
    <property type="evidence" value="ECO:0007669"/>
    <property type="project" value="TreeGrafter"/>
</dbReference>
<dbReference type="GO" id="GO:0004176">
    <property type="term" value="F:ATP-dependent peptidase activity"/>
    <property type="evidence" value="ECO:0007669"/>
    <property type="project" value="InterPro"/>
</dbReference>
<dbReference type="GO" id="GO:0051117">
    <property type="term" value="F:ATPase binding"/>
    <property type="evidence" value="ECO:0007669"/>
    <property type="project" value="TreeGrafter"/>
</dbReference>
<dbReference type="GO" id="GO:0004252">
    <property type="term" value="F:serine-type endopeptidase activity"/>
    <property type="evidence" value="ECO:0007669"/>
    <property type="project" value="UniProtKB-UniRule"/>
</dbReference>
<dbReference type="GO" id="GO:0006515">
    <property type="term" value="P:protein quality control for misfolded or incompletely synthesized proteins"/>
    <property type="evidence" value="ECO:0007669"/>
    <property type="project" value="TreeGrafter"/>
</dbReference>
<dbReference type="CDD" id="cd07017">
    <property type="entry name" value="S14_ClpP_2"/>
    <property type="match status" value="1"/>
</dbReference>
<dbReference type="FunFam" id="3.90.226.10:FF:000001">
    <property type="entry name" value="ATP-dependent Clp protease proteolytic subunit"/>
    <property type="match status" value="1"/>
</dbReference>
<dbReference type="Gene3D" id="3.90.226.10">
    <property type="entry name" value="2-enoyl-CoA Hydratase, Chain A, domain 1"/>
    <property type="match status" value="1"/>
</dbReference>
<dbReference type="HAMAP" id="MF_00444">
    <property type="entry name" value="ClpP"/>
    <property type="match status" value="1"/>
</dbReference>
<dbReference type="InterPro" id="IPR001907">
    <property type="entry name" value="ClpP"/>
</dbReference>
<dbReference type="InterPro" id="IPR029045">
    <property type="entry name" value="ClpP/crotonase-like_dom_sf"/>
</dbReference>
<dbReference type="InterPro" id="IPR023562">
    <property type="entry name" value="ClpP/TepA"/>
</dbReference>
<dbReference type="InterPro" id="IPR033135">
    <property type="entry name" value="ClpP_His_AS"/>
</dbReference>
<dbReference type="InterPro" id="IPR018215">
    <property type="entry name" value="ClpP_Ser_AS"/>
</dbReference>
<dbReference type="NCBIfam" id="TIGR00493">
    <property type="entry name" value="clpP"/>
    <property type="match status" value="1"/>
</dbReference>
<dbReference type="NCBIfam" id="NF001368">
    <property type="entry name" value="PRK00277.1"/>
    <property type="match status" value="1"/>
</dbReference>
<dbReference type="NCBIfam" id="NF009205">
    <property type="entry name" value="PRK12553.1"/>
    <property type="match status" value="1"/>
</dbReference>
<dbReference type="PANTHER" id="PTHR10381">
    <property type="entry name" value="ATP-DEPENDENT CLP PROTEASE PROTEOLYTIC SUBUNIT"/>
    <property type="match status" value="1"/>
</dbReference>
<dbReference type="PANTHER" id="PTHR10381:SF70">
    <property type="entry name" value="ATP-DEPENDENT CLP PROTEASE PROTEOLYTIC SUBUNIT"/>
    <property type="match status" value="1"/>
</dbReference>
<dbReference type="Pfam" id="PF00574">
    <property type="entry name" value="CLP_protease"/>
    <property type="match status" value="1"/>
</dbReference>
<dbReference type="PRINTS" id="PR00127">
    <property type="entry name" value="CLPPROTEASEP"/>
</dbReference>
<dbReference type="SUPFAM" id="SSF52096">
    <property type="entry name" value="ClpP/crotonase"/>
    <property type="match status" value="1"/>
</dbReference>
<dbReference type="PROSITE" id="PS00382">
    <property type="entry name" value="CLP_PROTEASE_HIS"/>
    <property type="match status" value="1"/>
</dbReference>
<dbReference type="PROSITE" id="PS00381">
    <property type="entry name" value="CLP_PROTEASE_SER"/>
    <property type="match status" value="1"/>
</dbReference>
<evidence type="ECO:0000255" key="1">
    <source>
        <dbReference type="HAMAP-Rule" id="MF_00444"/>
    </source>
</evidence>
<protein>
    <recommendedName>
        <fullName evidence="1">ATP-dependent Clp protease proteolytic subunit</fullName>
        <ecNumber evidence="1">3.4.21.92</ecNumber>
    </recommendedName>
    <alternativeName>
        <fullName evidence="1">Endopeptidase Clp</fullName>
    </alternativeName>
</protein>
<sequence>MITNNLVPTVIEKTAGGERAFDIYSRLLKERIVFLNGEVNDHSANLVIAQLLFLESEDPDKDIYFYINSPGGMVTAGMGVYDTMQFIKPDVSTICIGLAASMGSLLLAGGAKGKRYSLPSSQIMIHQPLGGFRGQASDIEIHAKNILRIKDRLNKVLAHHTGQDLETIVKDTDRDNFMMADEAKAYGLIDHVIESREAIIK</sequence>
<accession>A4IYB6</accession>
<feature type="chain" id="PRO_1000026095" description="ATP-dependent Clp protease proteolytic subunit">
    <location>
        <begin position="1"/>
        <end position="201"/>
    </location>
</feature>
<feature type="active site" description="Nucleophile" evidence="1">
    <location>
        <position position="101"/>
    </location>
</feature>
<feature type="active site" evidence="1">
    <location>
        <position position="126"/>
    </location>
</feature>
<gene>
    <name evidence="1" type="primary">clpP</name>
    <name type="ordered locus">FTW_1105</name>
</gene>